<comment type="similarity">
    <text evidence="1">Belongs to the universal ribosomal protein uS2 family.</text>
</comment>
<keyword id="KW-1185">Reference proteome</keyword>
<keyword id="KW-0687">Ribonucleoprotein</keyword>
<keyword id="KW-0689">Ribosomal protein</keyword>
<name>RS2_HAEDU</name>
<sequence length="238" mass="26245">MAQVSMRDMLNAGVHYGHQTRYWNPKMKPFIFGARNGVHVINLEKTLPLFNEALAELTRISSNNGKVLFVGTKRAASEAVKAAAVDCQQFYVNHRWLGGMLTNWKTVRQSIKRLKDLEAQTQDGTFDKITKKEALMRTRELEKLELSLGGIKDMAGLPDAIFVIGADHEHIAIKEANNLGIPVFAIVDTNSTPDGINYIIPGNDDATRAIQLYLDAASAAVKEGRGSNVEAELQIPAE</sequence>
<organism>
    <name type="scientific">Haemophilus ducreyi (strain 35000HP / ATCC 700724)</name>
    <dbReference type="NCBI Taxonomy" id="233412"/>
    <lineage>
        <taxon>Bacteria</taxon>
        <taxon>Pseudomonadati</taxon>
        <taxon>Pseudomonadota</taxon>
        <taxon>Gammaproteobacteria</taxon>
        <taxon>Pasteurellales</taxon>
        <taxon>Pasteurellaceae</taxon>
        <taxon>Haemophilus</taxon>
    </lineage>
</organism>
<accession>Q7VL79</accession>
<evidence type="ECO:0000255" key="1">
    <source>
        <dbReference type="HAMAP-Rule" id="MF_00291"/>
    </source>
</evidence>
<evidence type="ECO:0000305" key="2"/>
<reference key="1">
    <citation type="submission" date="2003-06" db="EMBL/GenBank/DDBJ databases">
        <title>The complete genome sequence of Haemophilus ducreyi.</title>
        <authorList>
            <person name="Munson R.S. Jr."/>
            <person name="Ray W.C."/>
            <person name="Mahairas G."/>
            <person name="Sabo P."/>
            <person name="Mungur R."/>
            <person name="Johnson L."/>
            <person name="Nguyen D."/>
            <person name="Wang J."/>
            <person name="Forst C."/>
            <person name="Hood L."/>
        </authorList>
    </citation>
    <scope>NUCLEOTIDE SEQUENCE [LARGE SCALE GENOMIC DNA]</scope>
    <source>
        <strain>35000HP / ATCC 700724</strain>
    </source>
</reference>
<protein>
    <recommendedName>
        <fullName evidence="1">Small ribosomal subunit protein uS2</fullName>
    </recommendedName>
    <alternativeName>
        <fullName evidence="2">30S ribosomal protein S2</fullName>
    </alternativeName>
</protein>
<feature type="chain" id="PRO_0000134175" description="Small ribosomal subunit protein uS2">
    <location>
        <begin position="1"/>
        <end position="238"/>
    </location>
</feature>
<dbReference type="EMBL" id="AE017143">
    <property type="protein sequence ID" value="AAP96380.1"/>
    <property type="molecule type" value="Genomic_DNA"/>
</dbReference>
<dbReference type="RefSeq" id="WP_010945412.1">
    <property type="nucleotide sequence ID" value="NC_002940.2"/>
</dbReference>
<dbReference type="SMR" id="Q7VL79"/>
<dbReference type="STRING" id="233412.HD_1600"/>
<dbReference type="KEGG" id="hdu:HD_1600"/>
<dbReference type="eggNOG" id="COG0052">
    <property type="taxonomic scope" value="Bacteria"/>
</dbReference>
<dbReference type="HOGENOM" id="CLU_040318_1_2_6"/>
<dbReference type="OrthoDB" id="9808036at2"/>
<dbReference type="Proteomes" id="UP000001022">
    <property type="component" value="Chromosome"/>
</dbReference>
<dbReference type="GO" id="GO:0022627">
    <property type="term" value="C:cytosolic small ribosomal subunit"/>
    <property type="evidence" value="ECO:0007669"/>
    <property type="project" value="TreeGrafter"/>
</dbReference>
<dbReference type="GO" id="GO:0003735">
    <property type="term" value="F:structural constituent of ribosome"/>
    <property type="evidence" value="ECO:0007669"/>
    <property type="project" value="InterPro"/>
</dbReference>
<dbReference type="GO" id="GO:0006412">
    <property type="term" value="P:translation"/>
    <property type="evidence" value="ECO:0007669"/>
    <property type="project" value="UniProtKB-UniRule"/>
</dbReference>
<dbReference type="CDD" id="cd01425">
    <property type="entry name" value="RPS2"/>
    <property type="match status" value="1"/>
</dbReference>
<dbReference type="FunFam" id="1.10.287.610:FF:000001">
    <property type="entry name" value="30S ribosomal protein S2"/>
    <property type="match status" value="1"/>
</dbReference>
<dbReference type="Gene3D" id="3.40.50.10490">
    <property type="entry name" value="Glucose-6-phosphate isomerase like protein, domain 1"/>
    <property type="match status" value="1"/>
</dbReference>
<dbReference type="Gene3D" id="1.10.287.610">
    <property type="entry name" value="Helix hairpin bin"/>
    <property type="match status" value="1"/>
</dbReference>
<dbReference type="HAMAP" id="MF_00291_B">
    <property type="entry name" value="Ribosomal_uS2_B"/>
    <property type="match status" value="1"/>
</dbReference>
<dbReference type="InterPro" id="IPR001865">
    <property type="entry name" value="Ribosomal_uS2"/>
</dbReference>
<dbReference type="InterPro" id="IPR005706">
    <property type="entry name" value="Ribosomal_uS2_bac/mit/plastid"/>
</dbReference>
<dbReference type="InterPro" id="IPR018130">
    <property type="entry name" value="Ribosomal_uS2_CS"/>
</dbReference>
<dbReference type="InterPro" id="IPR023591">
    <property type="entry name" value="Ribosomal_uS2_flav_dom_sf"/>
</dbReference>
<dbReference type="NCBIfam" id="TIGR01011">
    <property type="entry name" value="rpsB_bact"/>
    <property type="match status" value="1"/>
</dbReference>
<dbReference type="PANTHER" id="PTHR12534">
    <property type="entry name" value="30S RIBOSOMAL PROTEIN S2 PROKARYOTIC AND ORGANELLAR"/>
    <property type="match status" value="1"/>
</dbReference>
<dbReference type="PANTHER" id="PTHR12534:SF0">
    <property type="entry name" value="SMALL RIBOSOMAL SUBUNIT PROTEIN US2M"/>
    <property type="match status" value="1"/>
</dbReference>
<dbReference type="Pfam" id="PF00318">
    <property type="entry name" value="Ribosomal_S2"/>
    <property type="match status" value="1"/>
</dbReference>
<dbReference type="PRINTS" id="PR00395">
    <property type="entry name" value="RIBOSOMALS2"/>
</dbReference>
<dbReference type="SUPFAM" id="SSF52313">
    <property type="entry name" value="Ribosomal protein S2"/>
    <property type="match status" value="1"/>
</dbReference>
<dbReference type="PROSITE" id="PS00963">
    <property type="entry name" value="RIBOSOMAL_S2_2"/>
    <property type="match status" value="1"/>
</dbReference>
<proteinExistence type="inferred from homology"/>
<gene>
    <name evidence="1" type="primary">rpsB</name>
    <name type="ordered locus">HD_1600</name>
</gene>